<sequence length="124" mass="13730">MATINQLVRKPRSMKVAKSNVPALEACPQKRGVCTRVYTTTPKKPNSALRKVCRVRLTNGFEVTSYIGGEGHNLQEHSVILIRGGRVKDLPGVRYHTVRGALDCSGVKDRKQSRSKYGVKKPKA</sequence>
<organism>
    <name type="scientific">Yersinia pestis bv. Antiqua (strain Nepal516)</name>
    <dbReference type="NCBI Taxonomy" id="377628"/>
    <lineage>
        <taxon>Bacteria</taxon>
        <taxon>Pseudomonadati</taxon>
        <taxon>Pseudomonadota</taxon>
        <taxon>Gammaproteobacteria</taxon>
        <taxon>Enterobacterales</taxon>
        <taxon>Yersiniaceae</taxon>
        <taxon>Yersinia</taxon>
    </lineage>
</organism>
<proteinExistence type="inferred from homology"/>
<name>RS12_YERPN</name>
<dbReference type="EMBL" id="CP000305">
    <property type="protein sequence ID" value="ABG20194.1"/>
    <property type="molecule type" value="Genomic_DNA"/>
</dbReference>
<dbReference type="EMBL" id="ACNQ01000019">
    <property type="protein sequence ID" value="EEO74782.1"/>
    <property type="molecule type" value="Genomic_DNA"/>
</dbReference>
<dbReference type="RefSeq" id="WP_002212323.1">
    <property type="nucleotide sequence ID" value="NZ_ACNQ01000019.1"/>
</dbReference>
<dbReference type="SMR" id="Q1CCT6"/>
<dbReference type="GeneID" id="97454224"/>
<dbReference type="KEGG" id="ypn:YPN_3867"/>
<dbReference type="HOGENOM" id="CLU_104295_1_2_6"/>
<dbReference type="Proteomes" id="UP000008936">
    <property type="component" value="Chromosome"/>
</dbReference>
<dbReference type="GO" id="GO:0015935">
    <property type="term" value="C:small ribosomal subunit"/>
    <property type="evidence" value="ECO:0007669"/>
    <property type="project" value="InterPro"/>
</dbReference>
<dbReference type="GO" id="GO:0019843">
    <property type="term" value="F:rRNA binding"/>
    <property type="evidence" value="ECO:0007669"/>
    <property type="project" value="UniProtKB-UniRule"/>
</dbReference>
<dbReference type="GO" id="GO:0003735">
    <property type="term" value="F:structural constituent of ribosome"/>
    <property type="evidence" value="ECO:0007669"/>
    <property type="project" value="InterPro"/>
</dbReference>
<dbReference type="GO" id="GO:0000049">
    <property type="term" value="F:tRNA binding"/>
    <property type="evidence" value="ECO:0007669"/>
    <property type="project" value="UniProtKB-UniRule"/>
</dbReference>
<dbReference type="GO" id="GO:0006412">
    <property type="term" value="P:translation"/>
    <property type="evidence" value="ECO:0007669"/>
    <property type="project" value="UniProtKB-UniRule"/>
</dbReference>
<dbReference type="CDD" id="cd03368">
    <property type="entry name" value="Ribosomal_S12"/>
    <property type="match status" value="1"/>
</dbReference>
<dbReference type="FunFam" id="2.40.50.140:FF:000001">
    <property type="entry name" value="30S ribosomal protein S12"/>
    <property type="match status" value="1"/>
</dbReference>
<dbReference type="Gene3D" id="2.40.50.140">
    <property type="entry name" value="Nucleic acid-binding proteins"/>
    <property type="match status" value="1"/>
</dbReference>
<dbReference type="HAMAP" id="MF_00403_B">
    <property type="entry name" value="Ribosomal_uS12_B"/>
    <property type="match status" value="1"/>
</dbReference>
<dbReference type="InterPro" id="IPR012340">
    <property type="entry name" value="NA-bd_OB-fold"/>
</dbReference>
<dbReference type="InterPro" id="IPR006032">
    <property type="entry name" value="Ribosomal_uS12"/>
</dbReference>
<dbReference type="InterPro" id="IPR005679">
    <property type="entry name" value="Ribosomal_uS12_bac"/>
</dbReference>
<dbReference type="NCBIfam" id="TIGR00981">
    <property type="entry name" value="rpsL_bact"/>
    <property type="match status" value="1"/>
</dbReference>
<dbReference type="PANTHER" id="PTHR11652">
    <property type="entry name" value="30S RIBOSOMAL PROTEIN S12 FAMILY MEMBER"/>
    <property type="match status" value="1"/>
</dbReference>
<dbReference type="Pfam" id="PF00164">
    <property type="entry name" value="Ribosom_S12_S23"/>
    <property type="match status" value="1"/>
</dbReference>
<dbReference type="PIRSF" id="PIRSF002133">
    <property type="entry name" value="Ribosomal_S12/S23"/>
    <property type="match status" value="1"/>
</dbReference>
<dbReference type="PRINTS" id="PR01034">
    <property type="entry name" value="RIBOSOMALS12"/>
</dbReference>
<dbReference type="SUPFAM" id="SSF50249">
    <property type="entry name" value="Nucleic acid-binding proteins"/>
    <property type="match status" value="1"/>
</dbReference>
<dbReference type="PROSITE" id="PS00055">
    <property type="entry name" value="RIBOSOMAL_S12"/>
    <property type="match status" value="1"/>
</dbReference>
<accession>Q1CCT6</accession>
<accession>D1Q2M9</accession>
<comment type="function">
    <text evidence="2">With S4 and S5 plays an important role in translational accuracy.</text>
</comment>
<comment type="function">
    <text evidence="2">Interacts with and stabilizes bases of the 16S rRNA that are involved in tRNA selection in the A site and with the mRNA backbone. Located at the interface of the 30S and 50S subunits, it traverses the body of the 30S subunit contacting proteins on the other side and probably holding the rRNA structure together. The combined cluster of proteins S8, S12 and S17 appears to hold together the shoulder and platform of the 30S subunit.</text>
</comment>
<comment type="subunit">
    <text evidence="2">Part of the 30S ribosomal subunit. Contacts proteins S8 and S17. May interact with IF1 in the 30S initiation complex.</text>
</comment>
<comment type="similarity">
    <text evidence="2">Belongs to the universal ribosomal protein uS12 family.</text>
</comment>
<gene>
    <name evidence="2" type="primary">rpsL</name>
    <name type="ordered locus">YPN_3867</name>
    <name type="ORF">YP516_4392</name>
</gene>
<reference key="1">
    <citation type="journal article" date="2006" name="J. Bacteriol.">
        <title>Complete genome sequence of Yersinia pestis strains Antiqua and Nepal516: evidence of gene reduction in an emerging pathogen.</title>
        <authorList>
            <person name="Chain P.S.G."/>
            <person name="Hu P."/>
            <person name="Malfatti S.A."/>
            <person name="Radnedge L."/>
            <person name="Larimer F."/>
            <person name="Vergez L.M."/>
            <person name="Worsham P."/>
            <person name="Chu M.C."/>
            <person name="Andersen G.L."/>
        </authorList>
    </citation>
    <scope>NUCLEOTIDE SEQUENCE [LARGE SCALE GENOMIC DNA]</scope>
    <source>
        <strain>Nepal516</strain>
    </source>
</reference>
<reference key="2">
    <citation type="submission" date="2009-04" db="EMBL/GenBank/DDBJ databases">
        <title>Yersinia pestis Nepal516A whole genome shotgun sequencing project.</title>
        <authorList>
            <person name="Plunkett G. III"/>
            <person name="Anderson B.D."/>
            <person name="Baumler D.J."/>
            <person name="Burland V."/>
            <person name="Cabot E.L."/>
            <person name="Glasner J.D."/>
            <person name="Mau B."/>
            <person name="Neeno-Eckwall E."/>
            <person name="Perna N.T."/>
            <person name="Munk A.C."/>
            <person name="Tapia R."/>
            <person name="Green L.D."/>
            <person name="Rogers Y.C."/>
            <person name="Detter J.C."/>
            <person name="Bruce D.C."/>
            <person name="Brettin T.S."/>
        </authorList>
    </citation>
    <scope>NUCLEOTIDE SEQUENCE [LARGE SCALE GENOMIC DNA]</scope>
    <source>
        <strain>Nepal516</strain>
    </source>
</reference>
<evidence type="ECO:0000250" key="1"/>
<evidence type="ECO:0000255" key="2">
    <source>
        <dbReference type="HAMAP-Rule" id="MF_00403"/>
    </source>
</evidence>
<evidence type="ECO:0000305" key="3"/>
<keyword id="KW-0488">Methylation</keyword>
<keyword id="KW-0687">Ribonucleoprotein</keyword>
<keyword id="KW-0689">Ribosomal protein</keyword>
<keyword id="KW-0694">RNA-binding</keyword>
<keyword id="KW-0699">rRNA-binding</keyword>
<keyword id="KW-0820">tRNA-binding</keyword>
<feature type="chain" id="PRO_0000263603" description="Small ribosomal subunit protein uS12">
    <location>
        <begin position="1"/>
        <end position="124"/>
    </location>
</feature>
<feature type="modified residue" description="3-methylthioaspartic acid" evidence="1">
    <location>
        <position position="89"/>
    </location>
</feature>
<protein>
    <recommendedName>
        <fullName evidence="2">Small ribosomal subunit protein uS12</fullName>
    </recommendedName>
    <alternativeName>
        <fullName evidence="3">30S ribosomal protein S12</fullName>
    </alternativeName>
</protein>